<gene>
    <name type="primary">MSH2</name>
</gene>
<evidence type="ECO:0000250" key="1"/>
<evidence type="ECO:0000250" key="2">
    <source>
        <dbReference type="UniProtKB" id="P43246"/>
    </source>
</evidence>
<evidence type="ECO:0000250" key="3">
    <source>
        <dbReference type="UniProtKB" id="P43247"/>
    </source>
</evidence>
<evidence type="ECO:0000255" key="4"/>
<evidence type="ECO:0000305" key="5"/>
<protein>
    <recommendedName>
        <fullName>DNA mismatch repair protein Msh2</fullName>
    </recommendedName>
    <alternativeName>
        <fullName>MutS protein homolog 2</fullName>
    </alternativeName>
</protein>
<proteinExistence type="evidence at transcript level"/>
<feature type="initiator methionine" description="Removed" evidence="2">
    <location>
        <position position="1"/>
    </location>
</feature>
<feature type="chain" id="PRO_0000115182" description="DNA mismatch repair protein Msh2">
    <location>
        <begin position="2"/>
        <end position="933"/>
    </location>
</feature>
<feature type="region of interest" description="Interaction with EXO1" evidence="1">
    <location>
        <begin position="601"/>
        <end position="671"/>
    </location>
</feature>
<feature type="binding site" evidence="4">
    <location>
        <begin position="669"/>
        <end position="676"/>
    </location>
    <ligand>
        <name>ATP</name>
        <dbReference type="ChEBI" id="CHEBI:30616"/>
    </ligand>
</feature>
<feature type="modified residue" description="N-acetylalanine" evidence="2">
    <location>
        <position position="2"/>
    </location>
</feature>
<feature type="modified residue" description="N6-acetyllysine" evidence="2">
    <location>
        <position position="555"/>
    </location>
</feature>
<feature type="modified residue" description="N6-acetyllysine" evidence="3">
    <location>
        <position position="567"/>
    </location>
</feature>
<feature type="modified residue" description="N6-acetyllysine" evidence="2">
    <location>
        <position position="845"/>
    </location>
</feature>
<feature type="modified residue" description="N6-acetyllysine" evidence="2">
    <location>
        <position position="847"/>
    </location>
</feature>
<feature type="modified residue" description="N6-acetyllysine" evidence="2">
    <location>
        <position position="870"/>
    </location>
</feature>
<feature type="modified residue" description="N6-acetyllysine" evidence="2">
    <location>
        <position position="891"/>
    </location>
</feature>
<feature type="modified residue" description="Phosphoserine" evidence="2">
    <location>
        <position position="920"/>
    </location>
</feature>
<feature type="cross-link" description="Glycyl lysine isopeptide (Lys-Gly) (interchain with G-Cter in SUMO2)" evidence="2">
    <location>
        <position position="430"/>
    </location>
</feature>
<feature type="cross-link" description="Glycyl lysine isopeptide (Lys-Gly) (interchain with G-Cter in ubiquitin)" evidence="2">
    <location>
        <position position="845"/>
    </location>
</feature>
<feature type="cross-link" description="Glycyl lysine isopeptide (Lys-Gly) (interchain with G-Cter in ubiquitin)" evidence="2">
    <location>
        <position position="847"/>
    </location>
</feature>
<feature type="cross-link" description="Glycyl lysine isopeptide (Lys-Gly) (interchain with G-Cter in ubiquitin)" evidence="2">
    <location>
        <position position="870"/>
    </location>
</feature>
<feature type="cross-link" description="Glycyl lysine isopeptide (Lys-Gly) (interchain with G-Cter in ubiquitin)" evidence="2">
    <location>
        <position position="891"/>
    </location>
</feature>
<comment type="function">
    <text evidence="2">Component of the post-replicative DNA mismatch repair system (MMR). Forms two different heterodimers: MutS alpha (MSH2-MSH6 heterodimer) and MutS beta (MSH2-MSH3 heterodimer) which binds to DNA mismatches thereby initiating DNA repair. When bound, heterodimers bend the DNA helix and shields approximately 20 base pairs. MutS alpha recognizes single base mismatches and dinucleotide insertion-deletion loops (IDL) in the DNA. MutS beta recognizes larger insertion-deletion loops up to 13 nucleotides long. After mismatch binding, MutS alpha or beta forms a ternary complex with the MutL alpha heterodimer, which is thought to be responsible for directing the downstream MMR events, including strand discrimination, excision, and resynthesis. Recruits DNA helicase MCM9 to chromatin which unwinds the mismatch containing DNA strand. ATP binding and hydrolysis play a pivotal role in mismatch repair functions. The ATPase activity associated with MutS alpha regulates binding similar to a molecular switch: mismatched DNA provokes ADP--&gt;ATP exchange, resulting in a discernible conformational transition that converts MutS alpha into a sliding clamp capable of hydrolysis-independent diffusion along the DNA backbone. This transition is crucial for mismatch repair. MutS alpha may also play a role in DNA homologous recombination repair. In melanocytes may modulate both UV-B-induced cell cycle regulation and apoptosis.</text>
</comment>
<comment type="subunit">
    <text evidence="2">Component of the DNA mismatch repair (MMR) complex composed at least of MSH2, MSH3, MSH6, PMS1 and MLH1. Heterodimer consisting of MSH2-MSH6 (MutS alpha) or MSH2-MSH3 (MutS beta). Both heterodimers form a ternary complex with MutL alpha (MLH1-PMS1). Interacts with MCM9; the interaction recruits MCM9 to chromatin. Interacts with MCM8. Interacts with EXO1. Part of the BRCA1-associated genome surveillance complex (BASC), which contains BRCA1, MSH2, MSH6, MLH1, ATM, BLM, PMS2 and the RAD50-MRE11-NBS1 protein complex. This association could be a dynamic process changing throughout the cell cycle and within subnuclear domains. Interacts with ATR. Interacts with SLX4/BTBD12; this interaction is direct and links MutS beta to SLX4, a subunit of different structure-specific endonucleases. Interacts with SMARCAD1.</text>
</comment>
<comment type="subcellular location">
    <subcellularLocation>
        <location evidence="2">Nucleus</location>
    </subcellularLocation>
    <subcellularLocation>
        <location evidence="2">Chromosome</location>
    </subcellularLocation>
</comment>
<comment type="PTM">
    <text evidence="2">Sequentially deacetylated and polyubiquitinated by HDAC6, leading to MSH2 degradation.</text>
</comment>
<comment type="similarity">
    <text evidence="5">Belongs to the DNA mismatch repair MutS family.</text>
</comment>
<dbReference type="EMBL" id="AY728093">
    <property type="protein sequence ID" value="AAU85549.1"/>
    <property type="molecule type" value="mRNA"/>
</dbReference>
<dbReference type="SMR" id="Q5XXB5"/>
<dbReference type="GO" id="GO:0005694">
    <property type="term" value="C:chromosome"/>
    <property type="evidence" value="ECO:0007669"/>
    <property type="project" value="UniProtKB-SubCell"/>
</dbReference>
<dbReference type="GO" id="GO:0032301">
    <property type="term" value="C:MutSalpha complex"/>
    <property type="evidence" value="ECO:0000250"/>
    <property type="project" value="UniProtKB"/>
</dbReference>
<dbReference type="GO" id="GO:0005524">
    <property type="term" value="F:ATP binding"/>
    <property type="evidence" value="ECO:0007669"/>
    <property type="project" value="UniProtKB-KW"/>
</dbReference>
<dbReference type="GO" id="GO:0140664">
    <property type="term" value="F:ATP-dependent DNA damage sensor activity"/>
    <property type="evidence" value="ECO:0007669"/>
    <property type="project" value="InterPro"/>
</dbReference>
<dbReference type="GO" id="GO:0030983">
    <property type="term" value="F:mismatched DNA binding"/>
    <property type="evidence" value="ECO:0007669"/>
    <property type="project" value="InterPro"/>
</dbReference>
<dbReference type="GO" id="GO:0006298">
    <property type="term" value="P:mismatch repair"/>
    <property type="evidence" value="ECO:0007669"/>
    <property type="project" value="InterPro"/>
</dbReference>
<dbReference type="GO" id="GO:0006312">
    <property type="term" value="P:mitotic recombination"/>
    <property type="evidence" value="ECO:0007669"/>
    <property type="project" value="TreeGrafter"/>
</dbReference>
<dbReference type="GO" id="GO:0002204">
    <property type="term" value="P:somatic recombination of immunoglobulin genes involved in immune response"/>
    <property type="evidence" value="ECO:0007669"/>
    <property type="project" value="TreeGrafter"/>
</dbReference>
<dbReference type="CDD" id="cd03285">
    <property type="entry name" value="ABC_MSH2_euk"/>
    <property type="match status" value="1"/>
</dbReference>
<dbReference type="FunFam" id="1.10.1420.10:FF:000003">
    <property type="entry name" value="DNA mismatch repair protein"/>
    <property type="match status" value="1"/>
</dbReference>
<dbReference type="FunFam" id="1.10.1420.10:FF:000009">
    <property type="entry name" value="DNA mismatch repair protein"/>
    <property type="match status" value="1"/>
</dbReference>
<dbReference type="FunFam" id="3.30.420.110:FF:000002">
    <property type="entry name" value="DNA mismatch repair protein"/>
    <property type="match status" value="1"/>
</dbReference>
<dbReference type="FunFam" id="3.40.1170.10:FF:000003">
    <property type="entry name" value="DNA mismatch repair protein"/>
    <property type="match status" value="1"/>
</dbReference>
<dbReference type="FunFam" id="3.40.50.300:FF:000523">
    <property type="entry name" value="DNA mismatch repair protein"/>
    <property type="match status" value="1"/>
</dbReference>
<dbReference type="Gene3D" id="1.10.1420.10">
    <property type="match status" value="2"/>
</dbReference>
<dbReference type="Gene3D" id="3.40.1170.10">
    <property type="entry name" value="DNA repair protein MutS, domain I"/>
    <property type="match status" value="1"/>
</dbReference>
<dbReference type="Gene3D" id="3.30.420.110">
    <property type="entry name" value="MutS, connector domain"/>
    <property type="match status" value="1"/>
</dbReference>
<dbReference type="Gene3D" id="3.40.50.300">
    <property type="entry name" value="P-loop containing nucleotide triphosphate hydrolases"/>
    <property type="match status" value="1"/>
</dbReference>
<dbReference type="InterPro" id="IPR011184">
    <property type="entry name" value="DNA_mismatch_repair_Msh2"/>
</dbReference>
<dbReference type="InterPro" id="IPR007695">
    <property type="entry name" value="DNA_mismatch_repair_MutS-lik_N"/>
</dbReference>
<dbReference type="InterPro" id="IPR000432">
    <property type="entry name" value="DNA_mismatch_repair_MutS_C"/>
</dbReference>
<dbReference type="InterPro" id="IPR007861">
    <property type="entry name" value="DNA_mismatch_repair_MutS_clamp"/>
</dbReference>
<dbReference type="InterPro" id="IPR007696">
    <property type="entry name" value="DNA_mismatch_repair_MutS_core"/>
</dbReference>
<dbReference type="InterPro" id="IPR016151">
    <property type="entry name" value="DNA_mismatch_repair_MutS_N"/>
</dbReference>
<dbReference type="InterPro" id="IPR036187">
    <property type="entry name" value="DNA_mismatch_repair_MutS_sf"/>
</dbReference>
<dbReference type="InterPro" id="IPR007860">
    <property type="entry name" value="DNA_mmatch_repair_MutS_con_dom"/>
</dbReference>
<dbReference type="InterPro" id="IPR032642">
    <property type="entry name" value="Msh2_ATP-bd"/>
</dbReference>
<dbReference type="InterPro" id="IPR045076">
    <property type="entry name" value="MutS"/>
</dbReference>
<dbReference type="InterPro" id="IPR036678">
    <property type="entry name" value="MutS_con_dom_sf"/>
</dbReference>
<dbReference type="InterPro" id="IPR027417">
    <property type="entry name" value="P-loop_NTPase"/>
</dbReference>
<dbReference type="NCBIfam" id="NF003810">
    <property type="entry name" value="PRK05399.1"/>
    <property type="match status" value="1"/>
</dbReference>
<dbReference type="PANTHER" id="PTHR11361:SF35">
    <property type="entry name" value="DNA MISMATCH REPAIR PROTEIN MSH2"/>
    <property type="match status" value="1"/>
</dbReference>
<dbReference type="PANTHER" id="PTHR11361">
    <property type="entry name" value="DNA MISMATCH REPAIR PROTEIN MUTS FAMILY MEMBER"/>
    <property type="match status" value="1"/>
</dbReference>
<dbReference type="Pfam" id="PF01624">
    <property type="entry name" value="MutS_I"/>
    <property type="match status" value="1"/>
</dbReference>
<dbReference type="Pfam" id="PF05188">
    <property type="entry name" value="MutS_II"/>
    <property type="match status" value="1"/>
</dbReference>
<dbReference type="Pfam" id="PF05192">
    <property type="entry name" value="MutS_III"/>
    <property type="match status" value="1"/>
</dbReference>
<dbReference type="Pfam" id="PF05190">
    <property type="entry name" value="MutS_IV"/>
    <property type="match status" value="1"/>
</dbReference>
<dbReference type="Pfam" id="PF00488">
    <property type="entry name" value="MutS_V"/>
    <property type="match status" value="1"/>
</dbReference>
<dbReference type="PIRSF" id="PIRSF005813">
    <property type="entry name" value="MSH2"/>
    <property type="match status" value="1"/>
</dbReference>
<dbReference type="SMART" id="SM00534">
    <property type="entry name" value="MUTSac"/>
    <property type="match status" value="1"/>
</dbReference>
<dbReference type="SMART" id="SM00533">
    <property type="entry name" value="MUTSd"/>
    <property type="match status" value="1"/>
</dbReference>
<dbReference type="SUPFAM" id="SSF48334">
    <property type="entry name" value="DNA repair protein MutS, domain III"/>
    <property type="match status" value="1"/>
</dbReference>
<dbReference type="SUPFAM" id="SSF52540">
    <property type="entry name" value="P-loop containing nucleoside triphosphate hydrolases"/>
    <property type="match status" value="1"/>
</dbReference>
<dbReference type="PROSITE" id="PS00486">
    <property type="entry name" value="DNA_MISMATCH_REPAIR_2"/>
    <property type="match status" value="1"/>
</dbReference>
<accession>Q5XXB5</accession>
<name>MSH2_CHLAE</name>
<sequence length="933" mass="104752">MAVQPKETLQLESAAEVGFVRFFQSMPEKPTTTVRLFDRGDFYTAHGEDALLAAREVFKTQGVIKYMGPAGAKNLQSVVLSKMNFESFVKDLLLVRQYRVEVYKNRAGNKASKENDWYLAYKASPGNLSQFEDILFGNNDMSASIGVVGVKMSTVDGQRQVGVGYVDSTQRKLGLCEFPDNDQFSNLEALLIQIGPKECVLPGGETAGDMGKLRQIIQRGGILITERKKADFSTKDIYQDLNRLLKGKKGEQMNSAVLPEMENQVAVSSLSAVIKFLELLSDDSNFGQFELTTFDFSQYMKLDIAAVRALNLFQGSVEDTTGSQSLAALLNKCKTPQGQRLVNQWIKQPLMDKNRIEERLNLVEAFVEDAELRQTLQEDLLRRFPDLNRLAKKFQRQAANLQDCYRLYQGINQLPNVIQALEKHEGKHQKLLLAVFVTPLTDLRSDFSKFQEMIETTLDMDQVENHEFLVKPSFDPNLSELREIMNDLEKKMQSTLISAARDLGLDPGKQIKLDSSTQFGYYFRVTCKEEKVLRNNKNFSTVDIQKNGVKFTNSKLTSLNEEYTKNKTEYEEAQDAIVKEIVNISSGYVEPMQTLNDVLAQLDAVVSFAHVSNGAPVPYVRPAILEKGQGRIILKASRHACVEVQDEITFIPNDIYFEKDKQMFHIITGPNMGGKSTYIRQTGVIVLMAQIGCFVPCESAEVSIVDCILARVGAGDSQLKGVSTFMAEMLETASILRSATKDSLIIIDELGRGTSTYDGFGLAWAISEYIATKIGAFCMFATHFHELTALANQIPTVNNLHVTALTTEETLTMLYQVKKGVCDQSFGIHVAELANFPKHVIECAKQKALELEEFQYIGESQGYDMEPAAKKCYLEREQGEKIIQEFLSKVKQMPFTEMSEENITIKLKQLKAEVIAKNNSFVNEIISRIKVTT</sequence>
<keyword id="KW-0007">Acetylation</keyword>
<keyword id="KW-0067">ATP-binding</keyword>
<keyword id="KW-0131">Cell cycle</keyword>
<keyword id="KW-0158">Chromosome</keyword>
<keyword id="KW-0227">DNA damage</keyword>
<keyword id="KW-0234">DNA repair</keyword>
<keyword id="KW-0238">DNA-binding</keyword>
<keyword id="KW-1017">Isopeptide bond</keyword>
<keyword id="KW-0547">Nucleotide-binding</keyword>
<keyword id="KW-0539">Nucleus</keyword>
<keyword id="KW-0597">Phosphoprotein</keyword>
<keyword id="KW-0832">Ubl conjugation</keyword>
<organism>
    <name type="scientific">Chlorocebus aethiops</name>
    <name type="common">Green monkey</name>
    <name type="synonym">Cercopithecus aethiops</name>
    <dbReference type="NCBI Taxonomy" id="9534"/>
    <lineage>
        <taxon>Eukaryota</taxon>
        <taxon>Metazoa</taxon>
        <taxon>Chordata</taxon>
        <taxon>Craniata</taxon>
        <taxon>Vertebrata</taxon>
        <taxon>Euteleostomi</taxon>
        <taxon>Mammalia</taxon>
        <taxon>Eutheria</taxon>
        <taxon>Euarchontoglires</taxon>
        <taxon>Primates</taxon>
        <taxon>Haplorrhini</taxon>
        <taxon>Catarrhini</taxon>
        <taxon>Cercopithecidae</taxon>
        <taxon>Cercopithecinae</taxon>
        <taxon>Chlorocebus</taxon>
    </lineage>
</organism>
<reference key="1">
    <citation type="submission" date="2004-08" db="EMBL/GenBank/DDBJ databases">
        <authorList>
            <person name="Jacobs A.T."/>
            <person name="Marnett L.J."/>
        </authorList>
    </citation>
    <scope>NUCLEOTIDE SEQUENCE [MRNA]</scope>
</reference>